<feature type="chain" id="PRO_1000013201" description="UDP-3-O-acyl-N-acetylglucosamine deacetylase">
    <location>
        <begin position="1"/>
        <end position="294"/>
    </location>
</feature>
<feature type="active site" description="Proton donor" evidence="1">
    <location>
        <position position="259"/>
    </location>
</feature>
<feature type="binding site" evidence="1">
    <location>
        <position position="75"/>
    </location>
    <ligand>
        <name>Zn(2+)</name>
        <dbReference type="ChEBI" id="CHEBI:29105"/>
    </ligand>
</feature>
<feature type="binding site" evidence="1">
    <location>
        <position position="232"/>
    </location>
    <ligand>
        <name>Zn(2+)</name>
        <dbReference type="ChEBI" id="CHEBI:29105"/>
    </ligand>
</feature>
<feature type="binding site" evidence="1">
    <location>
        <position position="236"/>
    </location>
    <ligand>
        <name>Zn(2+)</name>
        <dbReference type="ChEBI" id="CHEBI:29105"/>
    </ligand>
</feature>
<gene>
    <name evidence="1" type="primary">lpxC</name>
    <name type="ordered locus">CHAB381_1683</name>
</gene>
<protein>
    <recommendedName>
        <fullName evidence="1">UDP-3-O-acyl-N-acetylglucosamine deacetylase</fullName>
        <shortName evidence="1">UDP-3-O-acyl-GlcNAc deacetylase</shortName>
        <ecNumber evidence="1">3.5.1.108</ecNumber>
    </recommendedName>
    <alternativeName>
        <fullName evidence="1">UDP-3-O-[R-3-hydroxymyristoyl]-N-acetylglucosamine deacetylase</fullName>
    </alternativeName>
</protein>
<reference key="1">
    <citation type="submission" date="2007-07" db="EMBL/GenBank/DDBJ databases">
        <title>Complete genome sequence of Campylobacter hominis ATCC BAA-381, a commensal isolated from the human gastrointestinal tract.</title>
        <authorList>
            <person name="Fouts D.E."/>
            <person name="Mongodin E.F."/>
            <person name="Puiu D."/>
            <person name="Sebastian Y."/>
            <person name="Miller W.G."/>
            <person name="Mandrell R.E."/>
            <person name="Nelson K.E."/>
        </authorList>
    </citation>
    <scope>NUCLEOTIDE SEQUENCE [LARGE SCALE GENOMIC DNA]</scope>
    <source>
        <strain>ATCC BAA-381 / DSM 21671 / CCUG 45161 / LMG 19568 / NCTC 13146 / CH001A</strain>
    </source>
</reference>
<sequence length="294" mass="32582">MKQTTIAKKVTSVGIGLHKGEPIRLTIEPSSENTGIIFYRSDLGISFKAEPKNVVNTQMATVIGNQKGYISTVEHILSAINGYGIDNIRINVDANEIPVMDGSSISFCMMLDEAGIKNLDASKKAIIIKREVEVKEGEKFVRVSPSKSPKFDYTIKFSNPIIGTQQFAFEFSRKNYVDEIARARTFGFLKDVQMLRSMNLALGGSLENAVVIDDNKILNPDGLRYENEFVRHKILDAIGDLSLLGAPILGDYTAYAASHDLNHKLTLAILTDAKNYEMVSIDEQIAHEYAKIFA</sequence>
<dbReference type="EC" id="3.5.1.108" evidence="1"/>
<dbReference type="EMBL" id="CP000776">
    <property type="protein sequence ID" value="ABS52292.1"/>
    <property type="molecule type" value="Genomic_DNA"/>
</dbReference>
<dbReference type="RefSeq" id="WP_012109501.1">
    <property type="nucleotide sequence ID" value="NC_009714.1"/>
</dbReference>
<dbReference type="SMR" id="A7I3V4"/>
<dbReference type="STRING" id="360107.CHAB381_1683"/>
<dbReference type="KEGG" id="cha:CHAB381_1683"/>
<dbReference type="eggNOG" id="COG0774">
    <property type="taxonomic scope" value="Bacteria"/>
</dbReference>
<dbReference type="HOGENOM" id="CLU_046528_1_0_7"/>
<dbReference type="OrthoDB" id="9802746at2"/>
<dbReference type="UniPathway" id="UPA00359">
    <property type="reaction ID" value="UER00478"/>
</dbReference>
<dbReference type="Proteomes" id="UP000002407">
    <property type="component" value="Chromosome"/>
</dbReference>
<dbReference type="GO" id="GO:0016020">
    <property type="term" value="C:membrane"/>
    <property type="evidence" value="ECO:0007669"/>
    <property type="project" value="GOC"/>
</dbReference>
<dbReference type="GO" id="GO:0046872">
    <property type="term" value="F:metal ion binding"/>
    <property type="evidence" value="ECO:0007669"/>
    <property type="project" value="UniProtKB-KW"/>
</dbReference>
<dbReference type="GO" id="GO:0103117">
    <property type="term" value="F:UDP-3-O-acyl-N-acetylglucosamine deacetylase activity"/>
    <property type="evidence" value="ECO:0007669"/>
    <property type="project" value="UniProtKB-UniRule"/>
</dbReference>
<dbReference type="GO" id="GO:0009245">
    <property type="term" value="P:lipid A biosynthetic process"/>
    <property type="evidence" value="ECO:0007669"/>
    <property type="project" value="UniProtKB-UniRule"/>
</dbReference>
<dbReference type="Gene3D" id="3.30.230.20">
    <property type="entry name" value="lpxc deacetylase, domain 1"/>
    <property type="match status" value="1"/>
</dbReference>
<dbReference type="Gene3D" id="3.30.1700.10">
    <property type="entry name" value="lpxc deacetylase, domain 2"/>
    <property type="match status" value="1"/>
</dbReference>
<dbReference type="HAMAP" id="MF_00388">
    <property type="entry name" value="LpxC"/>
    <property type="match status" value="1"/>
</dbReference>
<dbReference type="InterPro" id="IPR020568">
    <property type="entry name" value="Ribosomal_Su5_D2-typ_SF"/>
</dbReference>
<dbReference type="InterPro" id="IPR004463">
    <property type="entry name" value="UDP-acyl_GlcNac_deAcase"/>
</dbReference>
<dbReference type="InterPro" id="IPR011334">
    <property type="entry name" value="UDP-acyl_GlcNac_deAcase_C"/>
</dbReference>
<dbReference type="InterPro" id="IPR015870">
    <property type="entry name" value="UDP-acyl_N-AcGlcN_deAcase_N"/>
</dbReference>
<dbReference type="NCBIfam" id="TIGR00325">
    <property type="entry name" value="lpxC"/>
    <property type="match status" value="1"/>
</dbReference>
<dbReference type="PANTHER" id="PTHR33694">
    <property type="entry name" value="UDP-3-O-ACYL-N-ACETYLGLUCOSAMINE DEACETYLASE 1, MITOCHONDRIAL-RELATED"/>
    <property type="match status" value="1"/>
</dbReference>
<dbReference type="PANTHER" id="PTHR33694:SF1">
    <property type="entry name" value="UDP-3-O-ACYL-N-ACETYLGLUCOSAMINE DEACETYLASE 1, MITOCHONDRIAL-RELATED"/>
    <property type="match status" value="1"/>
</dbReference>
<dbReference type="Pfam" id="PF03331">
    <property type="entry name" value="LpxC"/>
    <property type="match status" value="1"/>
</dbReference>
<dbReference type="SUPFAM" id="SSF54211">
    <property type="entry name" value="Ribosomal protein S5 domain 2-like"/>
    <property type="match status" value="2"/>
</dbReference>
<evidence type="ECO:0000255" key="1">
    <source>
        <dbReference type="HAMAP-Rule" id="MF_00388"/>
    </source>
</evidence>
<name>LPXC_CAMHC</name>
<comment type="function">
    <text evidence="1">Catalyzes the hydrolysis of UDP-3-O-myristoyl-N-acetylglucosamine to form UDP-3-O-myristoylglucosamine and acetate, the committed step in lipid A biosynthesis.</text>
</comment>
<comment type="catalytic activity">
    <reaction evidence="1">
        <text>a UDP-3-O-[(3R)-3-hydroxyacyl]-N-acetyl-alpha-D-glucosamine + H2O = a UDP-3-O-[(3R)-3-hydroxyacyl]-alpha-D-glucosamine + acetate</text>
        <dbReference type="Rhea" id="RHEA:67816"/>
        <dbReference type="ChEBI" id="CHEBI:15377"/>
        <dbReference type="ChEBI" id="CHEBI:30089"/>
        <dbReference type="ChEBI" id="CHEBI:137740"/>
        <dbReference type="ChEBI" id="CHEBI:173225"/>
        <dbReference type="EC" id="3.5.1.108"/>
    </reaction>
</comment>
<comment type="cofactor">
    <cofactor evidence="1">
        <name>Zn(2+)</name>
        <dbReference type="ChEBI" id="CHEBI:29105"/>
    </cofactor>
</comment>
<comment type="pathway">
    <text evidence="1">Glycolipid biosynthesis; lipid IV(A) biosynthesis; lipid IV(A) from (3R)-3-hydroxytetradecanoyl-[acyl-carrier-protein] and UDP-N-acetyl-alpha-D-glucosamine: step 2/6.</text>
</comment>
<comment type="similarity">
    <text evidence="1">Belongs to the LpxC family.</text>
</comment>
<proteinExistence type="inferred from homology"/>
<accession>A7I3V4</accession>
<organism>
    <name type="scientific">Campylobacter hominis (strain ATCC BAA-381 / DSM 21671 / CCUG 45161 / LMG 19568 / NCTC 13146 / CH001A)</name>
    <dbReference type="NCBI Taxonomy" id="360107"/>
    <lineage>
        <taxon>Bacteria</taxon>
        <taxon>Pseudomonadati</taxon>
        <taxon>Campylobacterota</taxon>
        <taxon>Epsilonproteobacteria</taxon>
        <taxon>Campylobacterales</taxon>
        <taxon>Campylobacteraceae</taxon>
        <taxon>Campylobacter</taxon>
    </lineage>
</organism>
<keyword id="KW-0378">Hydrolase</keyword>
<keyword id="KW-0441">Lipid A biosynthesis</keyword>
<keyword id="KW-0444">Lipid biosynthesis</keyword>
<keyword id="KW-0443">Lipid metabolism</keyword>
<keyword id="KW-0479">Metal-binding</keyword>
<keyword id="KW-1185">Reference proteome</keyword>
<keyword id="KW-0862">Zinc</keyword>